<gene>
    <name evidence="1" type="primary">proA</name>
    <name type="ordered locus">NE2158</name>
</gene>
<accession>Q820I7</accession>
<sequence length="422" mass="45013">MEKTEKIQADMQALGRAARAAARIVAKADTAVKNHALIAMARAIRCHEASLLAANAADVAQARNKGLEPAMIDRLTLTPKGIASMAAGLEQIAALSDPIGAVTDLDYRPSGIQVGRMRVPLGVIAIIYEARPNVTADAAGLCLKAGNAAILRGGSEAIQSNQAIAACVQEGLRSAGLPEHAVQVVETTDRAAVGELITMSEYVDMVVPRGGKGLIERIANEARVPVIKHLDGVCHVYVDLSADLEKAVRVADNAKTQRYGTCNTMETLLVHAGIAERFLPRICKILLEKGVELRGDEAARALVAGIKPAVEEDWYAEYLAPVLSVRIVEDIDQAITHIATYGSQHTDAIVTEDYSRARQFLREVDSSSVMINASTRFADGFEYGLGAEIGISTDKLHARGPVGLEGLTSQKFIVLGDGHIRE</sequence>
<name>PROA_NITEU</name>
<keyword id="KW-0028">Amino-acid biosynthesis</keyword>
<keyword id="KW-0963">Cytoplasm</keyword>
<keyword id="KW-0521">NADP</keyword>
<keyword id="KW-0560">Oxidoreductase</keyword>
<keyword id="KW-0641">Proline biosynthesis</keyword>
<keyword id="KW-1185">Reference proteome</keyword>
<reference key="1">
    <citation type="journal article" date="2003" name="J. Bacteriol.">
        <title>Complete genome sequence of the ammonia-oxidizing bacterium and obligate chemolithoautotroph Nitrosomonas europaea.</title>
        <authorList>
            <person name="Chain P."/>
            <person name="Lamerdin J.E."/>
            <person name="Larimer F.W."/>
            <person name="Regala W."/>
            <person name="Lao V."/>
            <person name="Land M.L."/>
            <person name="Hauser L."/>
            <person name="Hooper A.B."/>
            <person name="Klotz M.G."/>
            <person name="Norton J."/>
            <person name="Sayavedra-Soto L.A."/>
            <person name="Arciero D.M."/>
            <person name="Hommes N.G."/>
            <person name="Whittaker M.M."/>
            <person name="Arp D.J."/>
        </authorList>
    </citation>
    <scope>NUCLEOTIDE SEQUENCE [LARGE SCALE GENOMIC DNA]</scope>
    <source>
        <strain>ATCC 19718 / CIP 103999 / KCTC 2705 / NBRC 14298</strain>
    </source>
</reference>
<organism>
    <name type="scientific">Nitrosomonas europaea (strain ATCC 19718 / CIP 103999 / KCTC 2705 / NBRC 14298)</name>
    <dbReference type="NCBI Taxonomy" id="228410"/>
    <lineage>
        <taxon>Bacteria</taxon>
        <taxon>Pseudomonadati</taxon>
        <taxon>Pseudomonadota</taxon>
        <taxon>Betaproteobacteria</taxon>
        <taxon>Nitrosomonadales</taxon>
        <taxon>Nitrosomonadaceae</taxon>
        <taxon>Nitrosomonas</taxon>
    </lineage>
</organism>
<dbReference type="EC" id="1.2.1.41" evidence="1"/>
<dbReference type="EMBL" id="AL954747">
    <property type="protein sequence ID" value="CAD86069.1"/>
    <property type="molecule type" value="Genomic_DNA"/>
</dbReference>
<dbReference type="RefSeq" id="WP_011112656.1">
    <property type="nucleotide sequence ID" value="NC_004757.1"/>
</dbReference>
<dbReference type="SMR" id="Q820I7"/>
<dbReference type="STRING" id="228410.NE2158"/>
<dbReference type="GeneID" id="87105294"/>
<dbReference type="KEGG" id="neu:NE2158"/>
<dbReference type="eggNOG" id="COG0014">
    <property type="taxonomic scope" value="Bacteria"/>
</dbReference>
<dbReference type="HOGENOM" id="CLU_030231_0_0_4"/>
<dbReference type="OrthoDB" id="9809970at2"/>
<dbReference type="PhylomeDB" id="Q820I7"/>
<dbReference type="UniPathway" id="UPA00098">
    <property type="reaction ID" value="UER00360"/>
</dbReference>
<dbReference type="Proteomes" id="UP000001416">
    <property type="component" value="Chromosome"/>
</dbReference>
<dbReference type="GO" id="GO:0005737">
    <property type="term" value="C:cytoplasm"/>
    <property type="evidence" value="ECO:0007669"/>
    <property type="project" value="UniProtKB-SubCell"/>
</dbReference>
<dbReference type="GO" id="GO:0004350">
    <property type="term" value="F:glutamate-5-semialdehyde dehydrogenase activity"/>
    <property type="evidence" value="ECO:0007669"/>
    <property type="project" value="UniProtKB-UniRule"/>
</dbReference>
<dbReference type="GO" id="GO:0050661">
    <property type="term" value="F:NADP binding"/>
    <property type="evidence" value="ECO:0007669"/>
    <property type="project" value="InterPro"/>
</dbReference>
<dbReference type="GO" id="GO:0055129">
    <property type="term" value="P:L-proline biosynthetic process"/>
    <property type="evidence" value="ECO:0007669"/>
    <property type="project" value="UniProtKB-UniRule"/>
</dbReference>
<dbReference type="CDD" id="cd07079">
    <property type="entry name" value="ALDH_F18-19_ProA-GPR"/>
    <property type="match status" value="1"/>
</dbReference>
<dbReference type="FunFam" id="3.40.309.10:FF:000006">
    <property type="entry name" value="Gamma-glutamyl phosphate reductase"/>
    <property type="match status" value="1"/>
</dbReference>
<dbReference type="Gene3D" id="3.40.605.10">
    <property type="entry name" value="Aldehyde Dehydrogenase, Chain A, domain 1"/>
    <property type="match status" value="1"/>
</dbReference>
<dbReference type="Gene3D" id="3.40.309.10">
    <property type="entry name" value="Aldehyde Dehydrogenase, Chain A, domain 2"/>
    <property type="match status" value="1"/>
</dbReference>
<dbReference type="HAMAP" id="MF_00412">
    <property type="entry name" value="ProA"/>
    <property type="match status" value="1"/>
</dbReference>
<dbReference type="InterPro" id="IPR016161">
    <property type="entry name" value="Ald_DH/histidinol_DH"/>
</dbReference>
<dbReference type="InterPro" id="IPR016163">
    <property type="entry name" value="Ald_DH_C"/>
</dbReference>
<dbReference type="InterPro" id="IPR016162">
    <property type="entry name" value="Ald_DH_N"/>
</dbReference>
<dbReference type="InterPro" id="IPR015590">
    <property type="entry name" value="Aldehyde_DH_dom"/>
</dbReference>
<dbReference type="InterPro" id="IPR020593">
    <property type="entry name" value="G-glutamylP_reductase_CS"/>
</dbReference>
<dbReference type="InterPro" id="IPR012134">
    <property type="entry name" value="Glu-5-SA_DH"/>
</dbReference>
<dbReference type="InterPro" id="IPR000965">
    <property type="entry name" value="GPR_dom"/>
</dbReference>
<dbReference type="NCBIfam" id="NF001221">
    <property type="entry name" value="PRK00197.1"/>
    <property type="match status" value="1"/>
</dbReference>
<dbReference type="NCBIfam" id="TIGR00407">
    <property type="entry name" value="proA"/>
    <property type="match status" value="1"/>
</dbReference>
<dbReference type="PANTHER" id="PTHR11063:SF8">
    <property type="entry name" value="DELTA-1-PYRROLINE-5-CARBOXYLATE SYNTHASE"/>
    <property type="match status" value="1"/>
</dbReference>
<dbReference type="PANTHER" id="PTHR11063">
    <property type="entry name" value="GLUTAMATE SEMIALDEHYDE DEHYDROGENASE"/>
    <property type="match status" value="1"/>
</dbReference>
<dbReference type="Pfam" id="PF00171">
    <property type="entry name" value="Aldedh"/>
    <property type="match status" value="2"/>
</dbReference>
<dbReference type="PIRSF" id="PIRSF000151">
    <property type="entry name" value="GPR"/>
    <property type="match status" value="1"/>
</dbReference>
<dbReference type="SUPFAM" id="SSF53720">
    <property type="entry name" value="ALDH-like"/>
    <property type="match status" value="1"/>
</dbReference>
<dbReference type="PROSITE" id="PS01223">
    <property type="entry name" value="PROA"/>
    <property type="match status" value="1"/>
</dbReference>
<evidence type="ECO:0000255" key="1">
    <source>
        <dbReference type="HAMAP-Rule" id="MF_00412"/>
    </source>
</evidence>
<comment type="function">
    <text evidence="1">Catalyzes the NADPH-dependent reduction of L-glutamate 5-phosphate into L-glutamate 5-semialdehyde and phosphate. The product spontaneously undergoes cyclization to form 1-pyrroline-5-carboxylate.</text>
</comment>
<comment type="catalytic activity">
    <reaction evidence="1">
        <text>L-glutamate 5-semialdehyde + phosphate + NADP(+) = L-glutamyl 5-phosphate + NADPH + H(+)</text>
        <dbReference type="Rhea" id="RHEA:19541"/>
        <dbReference type="ChEBI" id="CHEBI:15378"/>
        <dbReference type="ChEBI" id="CHEBI:43474"/>
        <dbReference type="ChEBI" id="CHEBI:57783"/>
        <dbReference type="ChEBI" id="CHEBI:58066"/>
        <dbReference type="ChEBI" id="CHEBI:58274"/>
        <dbReference type="ChEBI" id="CHEBI:58349"/>
        <dbReference type="EC" id="1.2.1.41"/>
    </reaction>
</comment>
<comment type="pathway">
    <text evidence="1">Amino-acid biosynthesis; L-proline biosynthesis; L-glutamate 5-semialdehyde from L-glutamate: step 2/2.</text>
</comment>
<comment type="subcellular location">
    <subcellularLocation>
        <location evidence="1">Cytoplasm</location>
    </subcellularLocation>
</comment>
<comment type="similarity">
    <text evidence="1">Belongs to the gamma-glutamyl phosphate reductase family.</text>
</comment>
<protein>
    <recommendedName>
        <fullName evidence="1">Gamma-glutamyl phosphate reductase</fullName>
        <shortName evidence="1">GPR</shortName>
        <ecNumber evidence="1">1.2.1.41</ecNumber>
    </recommendedName>
    <alternativeName>
        <fullName evidence="1">Glutamate-5-semialdehyde dehydrogenase</fullName>
    </alternativeName>
    <alternativeName>
        <fullName evidence="1">Glutamyl-gamma-semialdehyde dehydrogenase</fullName>
        <shortName evidence="1">GSA dehydrogenase</shortName>
    </alternativeName>
</protein>
<proteinExistence type="inferred from homology"/>
<feature type="chain" id="PRO_0000189757" description="Gamma-glutamyl phosphate reductase">
    <location>
        <begin position="1"/>
        <end position="422"/>
    </location>
</feature>